<keyword id="KW-0227">DNA damage</keyword>
<keyword id="KW-0234">DNA repair</keyword>
<keyword id="KW-0235">DNA replication</keyword>
<keyword id="KW-0436">Ligase</keyword>
<keyword id="KW-0460">Magnesium</keyword>
<keyword id="KW-0464">Manganese</keyword>
<keyword id="KW-0479">Metal-binding</keyword>
<keyword id="KW-0520">NAD</keyword>
<keyword id="KW-1185">Reference proteome</keyword>
<keyword id="KW-0862">Zinc</keyword>
<name>DNLJ_XANCP</name>
<dbReference type="EC" id="6.5.1.2" evidence="1"/>
<dbReference type="EMBL" id="AE008922">
    <property type="protein sequence ID" value="AAM40865.1"/>
    <property type="molecule type" value="Genomic_DNA"/>
</dbReference>
<dbReference type="RefSeq" id="NP_636941.1">
    <property type="nucleotide sequence ID" value="NC_003902.1"/>
</dbReference>
<dbReference type="RefSeq" id="WP_011036752.1">
    <property type="nucleotide sequence ID" value="NC_003902.1"/>
</dbReference>
<dbReference type="SMR" id="Q8PAB5"/>
<dbReference type="STRING" id="190485.XCC1570"/>
<dbReference type="EnsemblBacteria" id="AAM40865">
    <property type="protein sequence ID" value="AAM40865"/>
    <property type="gene ID" value="XCC1570"/>
</dbReference>
<dbReference type="KEGG" id="xcc:XCC1570"/>
<dbReference type="PATRIC" id="fig|190485.4.peg.1683"/>
<dbReference type="eggNOG" id="COG0272">
    <property type="taxonomic scope" value="Bacteria"/>
</dbReference>
<dbReference type="HOGENOM" id="CLU_007764_2_1_6"/>
<dbReference type="OrthoDB" id="9759736at2"/>
<dbReference type="Proteomes" id="UP000001010">
    <property type="component" value="Chromosome"/>
</dbReference>
<dbReference type="GO" id="GO:0005829">
    <property type="term" value="C:cytosol"/>
    <property type="evidence" value="ECO:0000318"/>
    <property type="project" value="GO_Central"/>
</dbReference>
<dbReference type="GO" id="GO:0003911">
    <property type="term" value="F:DNA ligase (NAD+) activity"/>
    <property type="evidence" value="ECO:0000318"/>
    <property type="project" value="GO_Central"/>
</dbReference>
<dbReference type="GO" id="GO:0046872">
    <property type="term" value="F:metal ion binding"/>
    <property type="evidence" value="ECO:0007669"/>
    <property type="project" value="UniProtKB-KW"/>
</dbReference>
<dbReference type="GO" id="GO:0006281">
    <property type="term" value="P:DNA repair"/>
    <property type="evidence" value="ECO:0007669"/>
    <property type="project" value="UniProtKB-KW"/>
</dbReference>
<dbReference type="GO" id="GO:0006260">
    <property type="term" value="P:DNA replication"/>
    <property type="evidence" value="ECO:0007669"/>
    <property type="project" value="UniProtKB-KW"/>
</dbReference>
<dbReference type="CDD" id="cd17748">
    <property type="entry name" value="BRCT_DNA_ligase_like"/>
    <property type="match status" value="1"/>
</dbReference>
<dbReference type="CDD" id="cd00114">
    <property type="entry name" value="LIGANc"/>
    <property type="match status" value="1"/>
</dbReference>
<dbReference type="FunFam" id="1.10.150.20:FF:000006">
    <property type="entry name" value="DNA ligase"/>
    <property type="match status" value="1"/>
</dbReference>
<dbReference type="FunFam" id="1.10.287.610:FF:000002">
    <property type="entry name" value="DNA ligase"/>
    <property type="match status" value="1"/>
</dbReference>
<dbReference type="FunFam" id="2.40.50.140:FF:000012">
    <property type="entry name" value="DNA ligase"/>
    <property type="match status" value="1"/>
</dbReference>
<dbReference type="FunFam" id="3.30.470.30:FF:000001">
    <property type="entry name" value="DNA ligase"/>
    <property type="match status" value="1"/>
</dbReference>
<dbReference type="FunFam" id="3.40.50.10190:FF:000054">
    <property type="entry name" value="DNA ligase"/>
    <property type="match status" value="1"/>
</dbReference>
<dbReference type="Gene3D" id="6.20.10.30">
    <property type="match status" value="1"/>
</dbReference>
<dbReference type="Gene3D" id="1.10.150.20">
    <property type="entry name" value="5' to 3' exonuclease, C-terminal subdomain"/>
    <property type="match status" value="2"/>
</dbReference>
<dbReference type="Gene3D" id="3.40.50.10190">
    <property type="entry name" value="BRCT domain"/>
    <property type="match status" value="1"/>
</dbReference>
<dbReference type="Gene3D" id="3.30.470.30">
    <property type="entry name" value="DNA ligase/mRNA capping enzyme"/>
    <property type="match status" value="1"/>
</dbReference>
<dbReference type="Gene3D" id="1.10.287.610">
    <property type="entry name" value="Helix hairpin bin"/>
    <property type="match status" value="1"/>
</dbReference>
<dbReference type="Gene3D" id="2.40.50.140">
    <property type="entry name" value="Nucleic acid-binding proteins"/>
    <property type="match status" value="1"/>
</dbReference>
<dbReference type="HAMAP" id="MF_01588">
    <property type="entry name" value="DNA_ligase_A"/>
    <property type="match status" value="1"/>
</dbReference>
<dbReference type="InterPro" id="IPR001357">
    <property type="entry name" value="BRCT_dom"/>
</dbReference>
<dbReference type="InterPro" id="IPR036420">
    <property type="entry name" value="BRCT_dom_sf"/>
</dbReference>
<dbReference type="InterPro" id="IPR041663">
    <property type="entry name" value="DisA/LigA_HHH"/>
</dbReference>
<dbReference type="InterPro" id="IPR001679">
    <property type="entry name" value="DNA_ligase"/>
</dbReference>
<dbReference type="InterPro" id="IPR018239">
    <property type="entry name" value="DNA_ligase_AS"/>
</dbReference>
<dbReference type="InterPro" id="IPR013839">
    <property type="entry name" value="DNAligase_adenylation"/>
</dbReference>
<dbReference type="InterPro" id="IPR013840">
    <property type="entry name" value="DNAligase_N"/>
</dbReference>
<dbReference type="InterPro" id="IPR012340">
    <property type="entry name" value="NA-bd_OB-fold"/>
</dbReference>
<dbReference type="InterPro" id="IPR004150">
    <property type="entry name" value="NAD_DNA_ligase_OB"/>
</dbReference>
<dbReference type="InterPro" id="IPR010994">
    <property type="entry name" value="RuvA_2-like"/>
</dbReference>
<dbReference type="InterPro" id="IPR004149">
    <property type="entry name" value="Znf_DNAligase_C4"/>
</dbReference>
<dbReference type="NCBIfam" id="TIGR00575">
    <property type="entry name" value="dnlj"/>
    <property type="match status" value="1"/>
</dbReference>
<dbReference type="NCBIfam" id="NF005932">
    <property type="entry name" value="PRK07956.1"/>
    <property type="match status" value="1"/>
</dbReference>
<dbReference type="PANTHER" id="PTHR23389">
    <property type="entry name" value="CHROMOSOME TRANSMISSION FIDELITY FACTOR 18"/>
    <property type="match status" value="1"/>
</dbReference>
<dbReference type="PANTHER" id="PTHR23389:SF9">
    <property type="entry name" value="DNA LIGASE"/>
    <property type="match status" value="1"/>
</dbReference>
<dbReference type="Pfam" id="PF00533">
    <property type="entry name" value="BRCT"/>
    <property type="match status" value="1"/>
</dbReference>
<dbReference type="Pfam" id="PF01653">
    <property type="entry name" value="DNA_ligase_aden"/>
    <property type="match status" value="1"/>
</dbReference>
<dbReference type="Pfam" id="PF03120">
    <property type="entry name" value="DNA_ligase_OB"/>
    <property type="match status" value="1"/>
</dbReference>
<dbReference type="Pfam" id="PF03119">
    <property type="entry name" value="DNA_ligase_ZBD"/>
    <property type="match status" value="1"/>
</dbReference>
<dbReference type="Pfam" id="PF12826">
    <property type="entry name" value="HHH_2"/>
    <property type="match status" value="1"/>
</dbReference>
<dbReference type="Pfam" id="PF22745">
    <property type="entry name" value="Nlig-Ia"/>
    <property type="match status" value="1"/>
</dbReference>
<dbReference type="PIRSF" id="PIRSF001604">
    <property type="entry name" value="LigA"/>
    <property type="match status" value="1"/>
</dbReference>
<dbReference type="SMART" id="SM00292">
    <property type="entry name" value="BRCT"/>
    <property type="match status" value="1"/>
</dbReference>
<dbReference type="SMART" id="SM00532">
    <property type="entry name" value="LIGANc"/>
    <property type="match status" value="1"/>
</dbReference>
<dbReference type="SUPFAM" id="SSF52113">
    <property type="entry name" value="BRCT domain"/>
    <property type="match status" value="1"/>
</dbReference>
<dbReference type="SUPFAM" id="SSF56091">
    <property type="entry name" value="DNA ligase/mRNA capping enzyme, catalytic domain"/>
    <property type="match status" value="1"/>
</dbReference>
<dbReference type="SUPFAM" id="SSF50249">
    <property type="entry name" value="Nucleic acid-binding proteins"/>
    <property type="match status" value="1"/>
</dbReference>
<dbReference type="SUPFAM" id="SSF47781">
    <property type="entry name" value="RuvA domain 2-like"/>
    <property type="match status" value="2"/>
</dbReference>
<dbReference type="PROSITE" id="PS50172">
    <property type="entry name" value="BRCT"/>
    <property type="match status" value="1"/>
</dbReference>
<dbReference type="PROSITE" id="PS01055">
    <property type="entry name" value="DNA_LIGASE_N1"/>
    <property type="match status" value="1"/>
</dbReference>
<protein>
    <recommendedName>
        <fullName evidence="1">DNA ligase</fullName>
        <ecNumber evidence="1">6.5.1.2</ecNumber>
    </recommendedName>
    <alternativeName>
        <fullName evidence="1">Polydeoxyribonucleotide synthase [NAD(+)]</fullName>
    </alternativeName>
</protein>
<proteinExistence type="inferred from homology"/>
<organism>
    <name type="scientific">Xanthomonas campestris pv. campestris (strain ATCC 33913 / DSM 3586 / NCPPB 528 / LMG 568 / P 25)</name>
    <dbReference type="NCBI Taxonomy" id="190485"/>
    <lineage>
        <taxon>Bacteria</taxon>
        <taxon>Pseudomonadati</taxon>
        <taxon>Pseudomonadota</taxon>
        <taxon>Gammaproteobacteria</taxon>
        <taxon>Lysobacterales</taxon>
        <taxon>Lysobacteraceae</taxon>
        <taxon>Xanthomonas</taxon>
    </lineage>
</organism>
<sequence length="833" mass="90348">MTASPDPAQRIDALRQRIEDANYRYHVLDEPQIADVEYDRLLRELEALEAAHPELATADSPTQRVGYLAASRFAEVRHVLPMLSLGNAFSDEEVAEFVRRISERLERKQPVFCAEPKLDGLAISLRYEQGEFVQGATRGDGATGEDVSANLRTVKAIPLRLRGTGWPEVLEVRGEVYMPRAAFEAYNAQMRLQGGKVLANPRNGAAGSLRQLDARITAQRPLSFFAYGVGEVADGALPPTHSTMLAQLREWGFPVSQLVEVVQGSEGLLTYYRRIGEARDGLPFDIDGVVYKLDDLAGQREMGFVSRAPRWALAHKFPAQEQSTTVEAIEIQIGRTGAATPVARLKPVHVAGVVVTNATLHNADQIARLDVRVGDTVIVRRAGDVIPEVAGVVAEQRPAGTHAWQMPTQCPVCGSEIVREEGQAVWRCSGELTCPAQRKEAFRHFVSRRAMDVDGLGEKFIEVLVDSGVVQGVADLYLLNVDQLLQLRLISTADSPHAFLREAREHLAAGAYAQVEQTMVGIGVDLAGVQPAPQTWQADLLRAGLPAFDWNRKKIATKWAENLIEAIETSRDTTLERFLFALGIEHVGESTAKALSAWFGELDVIRHLPWPLFKRVPDIGGEVARSLGHFFDQAGNQQAIDDLLQRGVRIGDAHPPSPKLRGALSFAVLLEDLDIPKVTPVRAQQLAAATASFDALIASEADPLLQAGVPAPVIASLQQWLARPENAALATAAQRAMDALLAQLPQADAVQAGPLDGQTVVITGTLAALTRDAAKQRLESLGAKVAGSVSKKTAFLVAGEEAGSKLDKAQSLGVEIWDEARLLAFLSEHGQAV</sequence>
<comment type="function">
    <text evidence="1">DNA ligase that catalyzes the formation of phosphodiester linkages between 5'-phosphoryl and 3'-hydroxyl groups in double-stranded DNA using NAD as a coenzyme and as the energy source for the reaction. It is essential for DNA replication and repair of damaged DNA.</text>
</comment>
<comment type="catalytic activity">
    <reaction evidence="1">
        <text>NAD(+) + (deoxyribonucleotide)n-3'-hydroxyl + 5'-phospho-(deoxyribonucleotide)m = (deoxyribonucleotide)n+m + AMP + beta-nicotinamide D-nucleotide.</text>
        <dbReference type="EC" id="6.5.1.2"/>
    </reaction>
</comment>
<comment type="cofactor">
    <cofactor evidence="1">
        <name>Mg(2+)</name>
        <dbReference type="ChEBI" id="CHEBI:18420"/>
    </cofactor>
    <cofactor evidence="1">
        <name>Mn(2+)</name>
        <dbReference type="ChEBI" id="CHEBI:29035"/>
    </cofactor>
</comment>
<comment type="similarity">
    <text evidence="1">Belongs to the NAD-dependent DNA ligase family. LigA subfamily.</text>
</comment>
<feature type="chain" id="PRO_0000313515" description="DNA ligase">
    <location>
        <begin position="1"/>
        <end position="833"/>
    </location>
</feature>
<feature type="domain" description="BRCT" evidence="1">
    <location>
        <begin position="750"/>
        <end position="833"/>
    </location>
</feature>
<feature type="active site" description="N6-AMP-lysine intermediate" evidence="1">
    <location>
        <position position="117"/>
    </location>
</feature>
<feature type="binding site" evidence="1">
    <location>
        <begin position="35"/>
        <end position="39"/>
    </location>
    <ligand>
        <name>NAD(+)</name>
        <dbReference type="ChEBI" id="CHEBI:57540"/>
    </ligand>
</feature>
<feature type="binding site" evidence="1">
    <location>
        <begin position="84"/>
        <end position="85"/>
    </location>
    <ligand>
        <name>NAD(+)</name>
        <dbReference type="ChEBI" id="CHEBI:57540"/>
    </ligand>
</feature>
<feature type="binding site" evidence="1">
    <location>
        <position position="115"/>
    </location>
    <ligand>
        <name>NAD(+)</name>
        <dbReference type="ChEBI" id="CHEBI:57540"/>
    </ligand>
</feature>
<feature type="binding site" evidence="1">
    <location>
        <position position="138"/>
    </location>
    <ligand>
        <name>NAD(+)</name>
        <dbReference type="ChEBI" id="CHEBI:57540"/>
    </ligand>
</feature>
<feature type="binding site" evidence="1">
    <location>
        <position position="175"/>
    </location>
    <ligand>
        <name>NAD(+)</name>
        <dbReference type="ChEBI" id="CHEBI:57540"/>
    </ligand>
</feature>
<feature type="binding site" evidence="1">
    <location>
        <position position="292"/>
    </location>
    <ligand>
        <name>NAD(+)</name>
        <dbReference type="ChEBI" id="CHEBI:57540"/>
    </ligand>
</feature>
<feature type="binding site" evidence="1">
    <location>
        <position position="316"/>
    </location>
    <ligand>
        <name>NAD(+)</name>
        <dbReference type="ChEBI" id="CHEBI:57540"/>
    </ligand>
</feature>
<feature type="binding site" evidence="1">
    <location>
        <position position="410"/>
    </location>
    <ligand>
        <name>Zn(2+)</name>
        <dbReference type="ChEBI" id="CHEBI:29105"/>
    </ligand>
</feature>
<feature type="binding site" evidence="1">
    <location>
        <position position="413"/>
    </location>
    <ligand>
        <name>Zn(2+)</name>
        <dbReference type="ChEBI" id="CHEBI:29105"/>
    </ligand>
</feature>
<feature type="binding site" evidence="1">
    <location>
        <position position="428"/>
    </location>
    <ligand>
        <name>Zn(2+)</name>
        <dbReference type="ChEBI" id="CHEBI:29105"/>
    </ligand>
</feature>
<feature type="binding site" evidence="1">
    <location>
        <position position="434"/>
    </location>
    <ligand>
        <name>Zn(2+)</name>
        <dbReference type="ChEBI" id="CHEBI:29105"/>
    </ligand>
</feature>
<reference key="1">
    <citation type="journal article" date="2002" name="Nature">
        <title>Comparison of the genomes of two Xanthomonas pathogens with differing host specificities.</title>
        <authorList>
            <person name="da Silva A.C.R."/>
            <person name="Ferro J.A."/>
            <person name="Reinach F.C."/>
            <person name="Farah C.S."/>
            <person name="Furlan L.R."/>
            <person name="Quaggio R.B."/>
            <person name="Monteiro-Vitorello C.B."/>
            <person name="Van Sluys M.A."/>
            <person name="Almeida N.F. Jr."/>
            <person name="Alves L.M.C."/>
            <person name="do Amaral A.M."/>
            <person name="Bertolini M.C."/>
            <person name="Camargo L.E.A."/>
            <person name="Camarotte G."/>
            <person name="Cannavan F."/>
            <person name="Cardozo J."/>
            <person name="Chambergo F."/>
            <person name="Ciapina L.P."/>
            <person name="Cicarelli R.M.B."/>
            <person name="Coutinho L.L."/>
            <person name="Cursino-Santos J.R."/>
            <person name="El-Dorry H."/>
            <person name="Faria J.B."/>
            <person name="Ferreira A.J.S."/>
            <person name="Ferreira R.C.C."/>
            <person name="Ferro M.I.T."/>
            <person name="Formighieri E.F."/>
            <person name="Franco M.C."/>
            <person name="Greggio C.C."/>
            <person name="Gruber A."/>
            <person name="Katsuyama A.M."/>
            <person name="Kishi L.T."/>
            <person name="Leite R.P."/>
            <person name="Lemos E.G.M."/>
            <person name="Lemos M.V.F."/>
            <person name="Locali E.C."/>
            <person name="Machado M.A."/>
            <person name="Madeira A.M.B.N."/>
            <person name="Martinez-Rossi N.M."/>
            <person name="Martins E.C."/>
            <person name="Meidanis J."/>
            <person name="Menck C.F.M."/>
            <person name="Miyaki C.Y."/>
            <person name="Moon D.H."/>
            <person name="Moreira L.M."/>
            <person name="Novo M.T.M."/>
            <person name="Okura V.K."/>
            <person name="Oliveira M.C."/>
            <person name="Oliveira V.R."/>
            <person name="Pereira H.A."/>
            <person name="Rossi A."/>
            <person name="Sena J.A.D."/>
            <person name="Silva C."/>
            <person name="de Souza R.F."/>
            <person name="Spinola L.A.F."/>
            <person name="Takita M.A."/>
            <person name="Tamura R.E."/>
            <person name="Teixeira E.C."/>
            <person name="Tezza R.I.D."/>
            <person name="Trindade dos Santos M."/>
            <person name="Truffi D."/>
            <person name="Tsai S.M."/>
            <person name="White F.F."/>
            <person name="Setubal J.C."/>
            <person name="Kitajima J.P."/>
        </authorList>
    </citation>
    <scope>NUCLEOTIDE SEQUENCE [LARGE SCALE GENOMIC DNA]</scope>
    <source>
        <strain>ATCC 33913 / DSM 3586 / NCPPB 528 / LMG 568 / P 25</strain>
    </source>
</reference>
<gene>
    <name evidence="1" type="primary">ligA</name>
    <name type="ordered locus">XCC1570</name>
</gene>
<accession>Q8PAB5</accession>
<evidence type="ECO:0000255" key="1">
    <source>
        <dbReference type="HAMAP-Rule" id="MF_01588"/>
    </source>
</evidence>